<name>RL2_MYCS5</name>
<keyword id="KW-1185">Reference proteome</keyword>
<keyword id="KW-0687">Ribonucleoprotein</keyword>
<keyword id="KW-0689">Ribosomal protein</keyword>
<keyword id="KW-0694">RNA-binding</keyword>
<keyword id="KW-0699">rRNA-binding</keyword>
<gene>
    <name evidence="1" type="primary">rplB</name>
    <name type="ordered locus">MS53_0640</name>
</gene>
<reference key="1">
    <citation type="journal article" date="2005" name="J. Bacteriol.">
        <title>Swine and poultry pathogens: the complete genome sequences of two strains of Mycoplasma hyopneumoniae and a strain of Mycoplasma synoviae.</title>
        <authorList>
            <person name="Vasconcelos A.T.R."/>
            <person name="Ferreira H.B."/>
            <person name="Bizarro C.V."/>
            <person name="Bonatto S.L."/>
            <person name="Carvalho M.O."/>
            <person name="Pinto P.M."/>
            <person name="Almeida D.F."/>
            <person name="Almeida L.G.P."/>
            <person name="Almeida R."/>
            <person name="Alves-Junior L."/>
            <person name="Assuncao E.N."/>
            <person name="Azevedo V.A.C."/>
            <person name="Bogo M.R."/>
            <person name="Brigido M.M."/>
            <person name="Brocchi M."/>
            <person name="Burity H.A."/>
            <person name="Camargo A.A."/>
            <person name="Camargo S.S."/>
            <person name="Carepo M.S."/>
            <person name="Carraro D.M."/>
            <person name="de Mattos Cascardo J.C."/>
            <person name="Castro L.A."/>
            <person name="Cavalcanti G."/>
            <person name="Chemale G."/>
            <person name="Collevatti R.G."/>
            <person name="Cunha C.W."/>
            <person name="Dallagiovanna B."/>
            <person name="Dambros B.P."/>
            <person name="Dellagostin O.A."/>
            <person name="Falcao C."/>
            <person name="Fantinatti-Garboggini F."/>
            <person name="Felipe M.S.S."/>
            <person name="Fiorentin L."/>
            <person name="Franco G.R."/>
            <person name="Freitas N.S.A."/>
            <person name="Frias D."/>
            <person name="Grangeiro T.B."/>
            <person name="Grisard E.C."/>
            <person name="Guimaraes C.T."/>
            <person name="Hungria M."/>
            <person name="Jardim S.N."/>
            <person name="Krieger M.A."/>
            <person name="Laurino J.P."/>
            <person name="Lima L.F.A."/>
            <person name="Lopes M.I."/>
            <person name="Loreto E.L.S."/>
            <person name="Madeira H.M.F."/>
            <person name="Manfio G.P."/>
            <person name="Maranhao A.Q."/>
            <person name="Martinkovics C.T."/>
            <person name="Medeiros S.R.B."/>
            <person name="Moreira M.A.M."/>
            <person name="Neiva M."/>
            <person name="Ramalho-Neto C.E."/>
            <person name="Nicolas M.F."/>
            <person name="Oliveira S.C."/>
            <person name="Paixao R.F.C."/>
            <person name="Pedrosa F.O."/>
            <person name="Pena S.D.J."/>
            <person name="Pereira M."/>
            <person name="Pereira-Ferrari L."/>
            <person name="Piffer I."/>
            <person name="Pinto L.S."/>
            <person name="Potrich D.P."/>
            <person name="Salim A.C.M."/>
            <person name="Santos F.R."/>
            <person name="Schmitt R."/>
            <person name="Schneider M.P.C."/>
            <person name="Schrank A."/>
            <person name="Schrank I.S."/>
            <person name="Schuck A.F."/>
            <person name="Seuanez H.N."/>
            <person name="Silva D.W."/>
            <person name="Silva R."/>
            <person name="Silva S.C."/>
            <person name="Soares C.M.A."/>
            <person name="Souza K.R.L."/>
            <person name="Souza R.C."/>
            <person name="Staats C.C."/>
            <person name="Steffens M.B.R."/>
            <person name="Teixeira S.M.R."/>
            <person name="Urmenyi T.P."/>
            <person name="Vainstein M.H."/>
            <person name="Zuccherato L.W."/>
            <person name="Simpson A.J.G."/>
            <person name="Zaha A."/>
        </authorList>
    </citation>
    <scope>NUCLEOTIDE SEQUENCE [LARGE SCALE GENOMIC DNA]</scope>
    <source>
        <strain>53</strain>
    </source>
</reference>
<accession>Q4A5C4</accession>
<proteinExistence type="inferred from homology"/>
<comment type="function">
    <text evidence="1">One of the primary rRNA binding proteins. Required for association of the 30S and 50S subunits to form the 70S ribosome, for tRNA binding and peptide bond formation. It has been suggested to have peptidyltransferase activity; this is somewhat controversial. Makes several contacts with the 16S rRNA in the 70S ribosome.</text>
</comment>
<comment type="subunit">
    <text evidence="1">Part of the 50S ribosomal subunit. Forms a bridge to the 30S subunit in the 70S ribosome.</text>
</comment>
<comment type="similarity">
    <text evidence="1">Belongs to the universal ribosomal protein uL2 family.</text>
</comment>
<evidence type="ECO:0000255" key="1">
    <source>
        <dbReference type="HAMAP-Rule" id="MF_01320"/>
    </source>
</evidence>
<evidence type="ECO:0000256" key="2">
    <source>
        <dbReference type="SAM" id="MobiDB-lite"/>
    </source>
</evidence>
<evidence type="ECO:0000305" key="3"/>
<organism>
    <name type="scientific">Mycoplasmopsis synoviae (strain 53)</name>
    <name type="common">Mycoplasma synoviae</name>
    <dbReference type="NCBI Taxonomy" id="262723"/>
    <lineage>
        <taxon>Bacteria</taxon>
        <taxon>Bacillati</taxon>
        <taxon>Mycoplasmatota</taxon>
        <taxon>Mycoplasmoidales</taxon>
        <taxon>Metamycoplasmataceae</taxon>
        <taxon>Mycoplasmopsis</taxon>
    </lineage>
</organism>
<feature type="chain" id="PRO_0000237213" description="Large ribosomal subunit protein uL2">
    <location>
        <begin position="1"/>
        <end position="281"/>
    </location>
</feature>
<feature type="region of interest" description="Disordered" evidence="2">
    <location>
        <begin position="223"/>
        <end position="281"/>
    </location>
</feature>
<feature type="compositionally biased region" description="Basic residues" evidence="2">
    <location>
        <begin position="261"/>
        <end position="281"/>
    </location>
</feature>
<sequence length="281" mass="30780">MAIKHYKPTTNGRRNMTSLDYKHNLSGDKPTKSLLRILKNSAGRNNQGKITVRHHGGRVKRFYRLVDFKRNKDNIPAVVKTIEYDPNRSANICLLAYADGEKRYIIAPKGIKVGQKVVSGEGADIIVGNSLPLSNIPEGTFIHNIEMQPGGGAKLARSAGTSAQILGKDDNGKYVVVKLKSGETRRILARCRATVGMVGNEEYSLVNVGKAGINRHRGIRPTVRGSVMNPVDHPHGGGEGKQPVGRKSPLTPWGKIALGVKTRKTKKSSNKLILRRRKDAK</sequence>
<dbReference type="EMBL" id="AE017245">
    <property type="protein sequence ID" value="AAZ44047.1"/>
    <property type="molecule type" value="Genomic_DNA"/>
</dbReference>
<dbReference type="RefSeq" id="WP_011283776.1">
    <property type="nucleotide sequence ID" value="NC_007294.1"/>
</dbReference>
<dbReference type="SMR" id="Q4A5C4"/>
<dbReference type="STRING" id="262723.MS53_0640"/>
<dbReference type="KEGG" id="msy:MS53_0640"/>
<dbReference type="eggNOG" id="COG0090">
    <property type="taxonomic scope" value="Bacteria"/>
</dbReference>
<dbReference type="HOGENOM" id="CLU_036235_2_1_14"/>
<dbReference type="OrthoDB" id="9778722at2"/>
<dbReference type="Proteomes" id="UP000000549">
    <property type="component" value="Chromosome"/>
</dbReference>
<dbReference type="GO" id="GO:0015934">
    <property type="term" value="C:large ribosomal subunit"/>
    <property type="evidence" value="ECO:0007669"/>
    <property type="project" value="InterPro"/>
</dbReference>
<dbReference type="GO" id="GO:0019843">
    <property type="term" value="F:rRNA binding"/>
    <property type="evidence" value="ECO:0007669"/>
    <property type="project" value="UniProtKB-UniRule"/>
</dbReference>
<dbReference type="GO" id="GO:0003735">
    <property type="term" value="F:structural constituent of ribosome"/>
    <property type="evidence" value="ECO:0007669"/>
    <property type="project" value="InterPro"/>
</dbReference>
<dbReference type="GO" id="GO:0016740">
    <property type="term" value="F:transferase activity"/>
    <property type="evidence" value="ECO:0007669"/>
    <property type="project" value="InterPro"/>
</dbReference>
<dbReference type="GO" id="GO:0002181">
    <property type="term" value="P:cytoplasmic translation"/>
    <property type="evidence" value="ECO:0007669"/>
    <property type="project" value="TreeGrafter"/>
</dbReference>
<dbReference type="FunFam" id="2.30.30.30:FF:000001">
    <property type="entry name" value="50S ribosomal protein L2"/>
    <property type="match status" value="1"/>
</dbReference>
<dbReference type="FunFam" id="2.40.50.140:FF:000003">
    <property type="entry name" value="50S ribosomal protein L2"/>
    <property type="match status" value="1"/>
</dbReference>
<dbReference type="FunFam" id="4.10.950.10:FF:000001">
    <property type="entry name" value="50S ribosomal protein L2"/>
    <property type="match status" value="1"/>
</dbReference>
<dbReference type="Gene3D" id="2.30.30.30">
    <property type="match status" value="1"/>
</dbReference>
<dbReference type="Gene3D" id="2.40.50.140">
    <property type="entry name" value="Nucleic acid-binding proteins"/>
    <property type="match status" value="1"/>
</dbReference>
<dbReference type="Gene3D" id="4.10.950.10">
    <property type="entry name" value="Ribosomal protein L2, domain 3"/>
    <property type="match status" value="1"/>
</dbReference>
<dbReference type="HAMAP" id="MF_01320_B">
    <property type="entry name" value="Ribosomal_uL2_B"/>
    <property type="match status" value="1"/>
</dbReference>
<dbReference type="InterPro" id="IPR012340">
    <property type="entry name" value="NA-bd_OB-fold"/>
</dbReference>
<dbReference type="InterPro" id="IPR014722">
    <property type="entry name" value="Rib_uL2_dom2"/>
</dbReference>
<dbReference type="InterPro" id="IPR002171">
    <property type="entry name" value="Ribosomal_uL2"/>
</dbReference>
<dbReference type="InterPro" id="IPR005880">
    <property type="entry name" value="Ribosomal_uL2_bac/org-type"/>
</dbReference>
<dbReference type="InterPro" id="IPR022669">
    <property type="entry name" value="Ribosomal_uL2_C"/>
</dbReference>
<dbReference type="InterPro" id="IPR022671">
    <property type="entry name" value="Ribosomal_uL2_CS"/>
</dbReference>
<dbReference type="InterPro" id="IPR014726">
    <property type="entry name" value="Ribosomal_uL2_dom3"/>
</dbReference>
<dbReference type="InterPro" id="IPR022666">
    <property type="entry name" value="Ribosomal_uL2_RNA-bd_dom"/>
</dbReference>
<dbReference type="InterPro" id="IPR008991">
    <property type="entry name" value="Translation_prot_SH3-like_sf"/>
</dbReference>
<dbReference type="NCBIfam" id="TIGR01171">
    <property type="entry name" value="rplB_bact"/>
    <property type="match status" value="1"/>
</dbReference>
<dbReference type="PANTHER" id="PTHR13691:SF5">
    <property type="entry name" value="LARGE RIBOSOMAL SUBUNIT PROTEIN UL2M"/>
    <property type="match status" value="1"/>
</dbReference>
<dbReference type="PANTHER" id="PTHR13691">
    <property type="entry name" value="RIBOSOMAL PROTEIN L2"/>
    <property type="match status" value="1"/>
</dbReference>
<dbReference type="Pfam" id="PF00181">
    <property type="entry name" value="Ribosomal_L2"/>
    <property type="match status" value="1"/>
</dbReference>
<dbReference type="Pfam" id="PF03947">
    <property type="entry name" value="Ribosomal_L2_C"/>
    <property type="match status" value="1"/>
</dbReference>
<dbReference type="PIRSF" id="PIRSF002158">
    <property type="entry name" value="Ribosomal_L2"/>
    <property type="match status" value="1"/>
</dbReference>
<dbReference type="SMART" id="SM01383">
    <property type="entry name" value="Ribosomal_L2"/>
    <property type="match status" value="1"/>
</dbReference>
<dbReference type="SMART" id="SM01382">
    <property type="entry name" value="Ribosomal_L2_C"/>
    <property type="match status" value="1"/>
</dbReference>
<dbReference type="SUPFAM" id="SSF50249">
    <property type="entry name" value="Nucleic acid-binding proteins"/>
    <property type="match status" value="1"/>
</dbReference>
<dbReference type="SUPFAM" id="SSF50104">
    <property type="entry name" value="Translation proteins SH3-like domain"/>
    <property type="match status" value="1"/>
</dbReference>
<dbReference type="PROSITE" id="PS00467">
    <property type="entry name" value="RIBOSOMAL_L2"/>
    <property type="match status" value="1"/>
</dbReference>
<protein>
    <recommendedName>
        <fullName evidence="1">Large ribosomal subunit protein uL2</fullName>
    </recommendedName>
    <alternativeName>
        <fullName evidence="3">50S ribosomal protein L2</fullName>
    </alternativeName>
</protein>